<dbReference type="EMBL" id="AM933172">
    <property type="protein sequence ID" value="CAR31819.1"/>
    <property type="molecule type" value="Genomic_DNA"/>
</dbReference>
<dbReference type="RefSeq" id="WP_001240929.1">
    <property type="nucleotide sequence ID" value="NC_011294.1"/>
</dbReference>
<dbReference type="SMR" id="B5R3J0"/>
<dbReference type="KEGG" id="set:SEN0231"/>
<dbReference type="HOGENOM" id="CLU_007664_1_0_6"/>
<dbReference type="Proteomes" id="UP000000613">
    <property type="component" value="Chromosome"/>
</dbReference>
<dbReference type="GO" id="GO:1990063">
    <property type="term" value="C:Bam protein complex"/>
    <property type="evidence" value="ECO:0007669"/>
    <property type="project" value="TreeGrafter"/>
</dbReference>
<dbReference type="GO" id="GO:0043165">
    <property type="term" value="P:Gram-negative-bacterium-type cell outer membrane assembly"/>
    <property type="evidence" value="ECO:0007669"/>
    <property type="project" value="UniProtKB-UniRule"/>
</dbReference>
<dbReference type="GO" id="GO:0051205">
    <property type="term" value="P:protein insertion into membrane"/>
    <property type="evidence" value="ECO:0007669"/>
    <property type="project" value="UniProtKB-UniRule"/>
</dbReference>
<dbReference type="FunFam" id="2.40.160.50:FF:000001">
    <property type="entry name" value="Outer membrane protein assembly factor BamA"/>
    <property type="match status" value="1"/>
</dbReference>
<dbReference type="FunFam" id="3.10.20.310:FF:000001">
    <property type="entry name" value="Outer membrane protein assembly factor BamA"/>
    <property type="match status" value="1"/>
</dbReference>
<dbReference type="FunFam" id="3.10.20.310:FF:000002">
    <property type="entry name" value="Outer membrane protein assembly factor BamA"/>
    <property type="match status" value="1"/>
</dbReference>
<dbReference type="FunFam" id="3.10.20.310:FF:000003">
    <property type="entry name" value="Outer membrane protein assembly factor BamA"/>
    <property type="match status" value="1"/>
</dbReference>
<dbReference type="FunFam" id="3.10.20.310:FF:000004">
    <property type="entry name" value="Outer membrane protein assembly factor BamA"/>
    <property type="match status" value="1"/>
</dbReference>
<dbReference type="FunFam" id="3.10.20.310:FF:000005">
    <property type="entry name" value="Outer membrane protein assembly factor BamA"/>
    <property type="match status" value="1"/>
</dbReference>
<dbReference type="Gene3D" id="3.10.20.310">
    <property type="entry name" value="membrane protein fhac"/>
    <property type="match status" value="5"/>
</dbReference>
<dbReference type="Gene3D" id="2.40.160.50">
    <property type="entry name" value="membrane protein fhac: a member of the omp85/tpsb transporter family"/>
    <property type="match status" value="1"/>
</dbReference>
<dbReference type="HAMAP" id="MF_01430">
    <property type="entry name" value="OM_assembly_BamA"/>
    <property type="match status" value="1"/>
</dbReference>
<dbReference type="InterPro" id="IPR000184">
    <property type="entry name" value="Bac_surfAg_D15"/>
</dbReference>
<dbReference type="InterPro" id="IPR010827">
    <property type="entry name" value="BamA/TamA_POTRA"/>
</dbReference>
<dbReference type="InterPro" id="IPR039910">
    <property type="entry name" value="D15-like"/>
</dbReference>
<dbReference type="InterPro" id="IPR023707">
    <property type="entry name" value="OM_assembly_BamA"/>
</dbReference>
<dbReference type="InterPro" id="IPR034746">
    <property type="entry name" value="POTRA"/>
</dbReference>
<dbReference type="NCBIfam" id="TIGR03303">
    <property type="entry name" value="OM_YaeT"/>
    <property type="match status" value="1"/>
</dbReference>
<dbReference type="NCBIfam" id="NF008287">
    <property type="entry name" value="PRK11067.1"/>
    <property type="match status" value="1"/>
</dbReference>
<dbReference type="PANTHER" id="PTHR12815:SF23">
    <property type="entry name" value="OUTER MEMBRANE PROTEIN ASSEMBLY FACTOR BAMA"/>
    <property type="match status" value="1"/>
</dbReference>
<dbReference type="PANTHER" id="PTHR12815">
    <property type="entry name" value="SORTING AND ASSEMBLY MACHINERY SAMM50 PROTEIN FAMILY MEMBER"/>
    <property type="match status" value="1"/>
</dbReference>
<dbReference type="Pfam" id="PF01103">
    <property type="entry name" value="Omp85"/>
    <property type="match status" value="1"/>
</dbReference>
<dbReference type="Pfam" id="PF07244">
    <property type="entry name" value="POTRA"/>
    <property type="match status" value="4"/>
</dbReference>
<dbReference type="PIRSF" id="PIRSF006076">
    <property type="entry name" value="OM_assembly_OMP85"/>
    <property type="match status" value="1"/>
</dbReference>
<dbReference type="PROSITE" id="PS51779">
    <property type="entry name" value="POTRA"/>
    <property type="match status" value="5"/>
</dbReference>
<reference key="1">
    <citation type="journal article" date="2008" name="Genome Res.">
        <title>Comparative genome analysis of Salmonella enteritidis PT4 and Salmonella gallinarum 287/91 provides insights into evolutionary and host adaptation pathways.</title>
        <authorList>
            <person name="Thomson N.R."/>
            <person name="Clayton D.J."/>
            <person name="Windhorst D."/>
            <person name="Vernikos G."/>
            <person name="Davidson S."/>
            <person name="Churcher C."/>
            <person name="Quail M.A."/>
            <person name="Stevens M."/>
            <person name="Jones M.A."/>
            <person name="Watson M."/>
            <person name="Barron A."/>
            <person name="Layton A."/>
            <person name="Pickard D."/>
            <person name="Kingsley R.A."/>
            <person name="Bignell A."/>
            <person name="Clark L."/>
            <person name="Harris B."/>
            <person name="Ormond D."/>
            <person name="Abdellah Z."/>
            <person name="Brooks K."/>
            <person name="Cherevach I."/>
            <person name="Chillingworth T."/>
            <person name="Woodward J."/>
            <person name="Norberczak H."/>
            <person name="Lord A."/>
            <person name="Arrowsmith C."/>
            <person name="Jagels K."/>
            <person name="Moule S."/>
            <person name="Mungall K."/>
            <person name="Saunders M."/>
            <person name="Whitehead S."/>
            <person name="Chabalgoity J.A."/>
            <person name="Maskell D."/>
            <person name="Humphreys T."/>
            <person name="Roberts M."/>
            <person name="Barrow P.A."/>
            <person name="Dougan G."/>
            <person name="Parkhill J."/>
        </authorList>
    </citation>
    <scope>NUCLEOTIDE SEQUENCE [LARGE SCALE GENOMIC DNA]</scope>
    <source>
        <strain>P125109</strain>
    </source>
</reference>
<comment type="function">
    <text evidence="1">Part of the outer membrane protein assembly complex, which is involved in assembly and insertion of beta-barrel proteins into the outer membrane. Constitutes, with BamD, the core component of the assembly machinery.</text>
</comment>
<comment type="subunit">
    <text evidence="1">Part of the Bam complex, which is composed of the outer membrane protein BamA, and four lipoproteins BamB, BamC, BamD and BamE.</text>
</comment>
<comment type="subcellular location">
    <subcellularLocation>
        <location evidence="1">Cell outer membrane</location>
    </subcellularLocation>
</comment>
<comment type="similarity">
    <text evidence="1">Belongs to the BamA family.</text>
</comment>
<proteinExistence type="inferred from homology"/>
<gene>
    <name evidence="1" type="primary">bamA</name>
    <name type="synonym">yaeT</name>
    <name type="ordered locus">SEN0231</name>
</gene>
<feature type="signal peptide" evidence="1">
    <location>
        <begin position="1"/>
        <end position="20"/>
    </location>
</feature>
<feature type="chain" id="PRO_5000397795" description="Outer membrane protein assembly factor BamA">
    <location>
        <begin position="21"/>
        <end position="804"/>
    </location>
</feature>
<feature type="domain" description="POTRA 1" evidence="2">
    <location>
        <begin position="24"/>
        <end position="91"/>
    </location>
</feature>
<feature type="domain" description="POTRA 2" evidence="2">
    <location>
        <begin position="92"/>
        <end position="172"/>
    </location>
</feature>
<feature type="domain" description="POTRA 3" evidence="2">
    <location>
        <begin position="175"/>
        <end position="263"/>
    </location>
</feature>
<feature type="domain" description="POTRA 4" evidence="2">
    <location>
        <begin position="266"/>
        <end position="344"/>
    </location>
</feature>
<feature type="domain" description="POTRA 5" evidence="2">
    <location>
        <begin position="347"/>
        <end position="421"/>
    </location>
</feature>
<name>BAMA_SALEP</name>
<evidence type="ECO:0000255" key="1">
    <source>
        <dbReference type="HAMAP-Rule" id="MF_01430"/>
    </source>
</evidence>
<evidence type="ECO:0000255" key="2">
    <source>
        <dbReference type="PROSITE-ProRule" id="PRU01115"/>
    </source>
</evidence>
<organism>
    <name type="scientific">Salmonella enteritidis PT4 (strain P125109)</name>
    <dbReference type="NCBI Taxonomy" id="550537"/>
    <lineage>
        <taxon>Bacteria</taxon>
        <taxon>Pseudomonadati</taxon>
        <taxon>Pseudomonadota</taxon>
        <taxon>Gammaproteobacteria</taxon>
        <taxon>Enterobacterales</taxon>
        <taxon>Enterobacteriaceae</taxon>
        <taxon>Salmonella</taxon>
    </lineage>
</organism>
<keyword id="KW-0998">Cell outer membrane</keyword>
<keyword id="KW-0472">Membrane</keyword>
<keyword id="KW-0677">Repeat</keyword>
<keyword id="KW-0732">Signal</keyword>
<keyword id="KW-0812">Transmembrane</keyword>
<keyword id="KW-1134">Transmembrane beta strand</keyword>
<sequence length="804" mass="89541">MAMKKLLIASLLFSSATVYGAEGFVVKDIHFEGLQRVAVGAALLSMPVRTGDTVNDEDISNTIRALFATGNFEDVRVLRDGNTLLVQVKERPTIASITFSGNKSVKDDMLKQNLEASGVRVGESLDRTTLSDIEKGLEDFYYSVGKYSASVKAVVTPLPRNRVDLKLVFQEGVSAKIQQINIVGNHAFSTEELISHFQLRDEVPWWNVVGDRKYQKQKLAGDLETLRSYYLDRGYARFNIDSTQVSLTPDKKGIYITVNITEGDQYKLSGVQVSGNLAGHSAEIEKLTKIEPGELYNGTKVTKMEDDIKKLLGRYGYAYPRVQSQPEINDADKTVKLRVNVDAGNRFYVRKIRFEGNDTSKDSVLRREMRQMEGAWLGSDLVDQGKERLNRLGFFETVDTDTQRVPGSPDQVDVVYKVKERNTGSFNFGIGYGTESGVSFQAGVQQDNWLGTGYSVGINGTKNDYQTYSELSVTNPYFTVDGVSLGGRIFYNDFQADDADLSDYTNKSYGTDVTLGFPINEYNTLRAGLGYVHNKLSNMQPQIAMDRYLESMGQSADTSSFAADDFTFNYGWTYNKLDRGYFPTDGSRVNLTGKVTIPGSDNEYYKVSLDTATYVPIDNDHKWVVLGRTRWGYGDGLGGKEMPFYENFYAGGSSTVRGFQSNTIGPKAVYKNGAHTSWDDNDDYEDCTQESGCKSDDAVGGNAMAVASLEFITPTPFISEKYANSVRTSFFWDMGTVWDTNWDPSSAPSDVPDYSDPGNIRMSAGIALQWMSPLGPLVFSYAQPFKKYDGDKAEQFQFNIGKTW</sequence>
<protein>
    <recommendedName>
        <fullName evidence="1">Outer membrane protein assembly factor BamA</fullName>
    </recommendedName>
</protein>
<accession>B5R3J0</accession>